<gene>
    <name evidence="2" type="primary">mutM</name>
    <name evidence="2" type="synonym">fpg</name>
    <name type="ordered locus">Pmen_4197</name>
</gene>
<evidence type="ECO:0000250" key="1"/>
<evidence type="ECO:0000255" key="2">
    <source>
        <dbReference type="HAMAP-Rule" id="MF_00103"/>
    </source>
</evidence>
<feature type="initiator methionine" description="Removed" evidence="1">
    <location>
        <position position="1"/>
    </location>
</feature>
<feature type="chain" id="PRO_1000008744" description="Formamidopyrimidine-DNA glycosylase">
    <location>
        <begin position="2"/>
        <end position="270"/>
    </location>
</feature>
<feature type="zinc finger region" description="FPG-type" evidence="2">
    <location>
        <begin position="236"/>
        <end position="270"/>
    </location>
</feature>
<feature type="active site" description="Schiff-base intermediate with DNA" evidence="2">
    <location>
        <position position="2"/>
    </location>
</feature>
<feature type="active site" description="Proton donor" evidence="2">
    <location>
        <position position="3"/>
    </location>
</feature>
<feature type="active site" description="Proton donor; for beta-elimination activity" evidence="2">
    <location>
        <position position="58"/>
    </location>
</feature>
<feature type="active site" description="Proton donor; for delta-elimination activity" evidence="2">
    <location>
        <position position="260"/>
    </location>
</feature>
<feature type="binding site" evidence="2">
    <location>
        <position position="91"/>
    </location>
    <ligand>
        <name>DNA</name>
        <dbReference type="ChEBI" id="CHEBI:16991"/>
    </ligand>
</feature>
<feature type="binding site" evidence="2">
    <location>
        <position position="110"/>
    </location>
    <ligand>
        <name>DNA</name>
        <dbReference type="ChEBI" id="CHEBI:16991"/>
    </ligand>
</feature>
<feature type="binding site" evidence="2">
    <location>
        <position position="151"/>
    </location>
    <ligand>
        <name>DNA</name>
        <dbReference type="ChEBI" id="CHEBI:16991"/>
    </ligand>
</feature>
<comment type="function">
    <text evidence="2">Involved in base excision repair of DNA damaged by oxidation or by mutagenic agents. Acts as a DNA glycosylase that recognizes and removes damaged bases. Has a preference for oxidized purines, such as 7,8-dihydro-8-oxoguanine (8-oxoG). Has AP (apurinic/apyrimidinic) lyase activity and introduces nicks in the DNA strand. Cleaves the DNA backbone by beta-delta elimination to generate a single-strand break at the site of the removed base with both 3'- and 5'-phosphates.</text>
</comment>
<comment type="catalytic activity">
    <reaction evidence="2">
        <text>Hydrolysis of DNA containing ring-opened 7-methylguanine residues, releasing 2,6-diamino-4-hydroxy-5-(N-methyl)formamidopyrimidine.</text>
        <dbReference type="EC" id="3.2.2.23"/>
    </reaction>
</comment>
<comment type="catalytic activity">
    <reaction evidence="2">
        <text>2'-deoxyribonucleotide-(2'-deoxyribose 5'-phosphate)-2'-deoxyribonucleotide-DNA = a 3'-end 2'-deoxyribonucleotide-(2,3-dehydro-2,3-deoxyribose 5'-phosphate)-DNA + a 5'-end 5'-phospho-2'-deoxyribonucleoside-DNA + H(+)</text>
        <dbReference type="Rhea" id="RHEA:66592"/>
        <dbReference type="Rhea" id="RHEA-COMP:13180"/>
        <dbReference type="Rhea" id="RHEA-COMP:16897"/>
        <dbReference type="Rhea" id="RHEA-COMP:17067"/>
        <dbReference type="ChEBI" id="CHEBI:15378"/>
        <dbReference type="ChEBI" id="CHEBI:136412"/>
        <dbReference type="ChEBI" id="CHEBI:157695"/>
        <dbReference type="ChEBI" id="CHEBI:167181"/>
        <dbReference type="EC" id="4.2.99.18"/>
    </reaction>
</comment>
<comment type="cofactor">
    <cofactor evidence="2">
        <name>Zn(2+)</name>
        <dbReference type="ChEBI" id="CHEBI:29105"/>
    </cofactor>
    <text evidence="2">Binds 1 zinc ion per subunit.</text>
</comment>
<comment type="subunit">
    <text evidence="2">Monomer.</text>
</comment>
<comment type="similarity">
    <text evidence="2">Belongs to the FPG family.</text>
</comment>
<accession>A4Y028</accession>
<proteinExistence type="inferred from homology"/>
<keyword id="KW-0227">DNA damage</keyword>
<keyword id="KW-0234">DNA repair</keyword>
<keyword id="KW-0238">DNA-binding</keyword>
<keyword id="KW-0326">Glycosidase</keyword>
<keyword id="KW-0378">Hydrolase</keyword>
<keyword id="KW-0456">Lyase</keyword>
<keyword id="KW-0479">Metal-binding</keyword>
<keyword id="KW-0511">Multifunctional enzyme</keyword>
<keyword id="KW-0862">Zinc</keyword>
<keyword id="KW-0863">Zinc-finger</keyword>
<sequence length="270" mass="30214">MPELPEVETTRRGIAPYLEGQRVSRVIVRERRLRWPIPEDLDVRLSGQRIECVERRAKYLLIKAEAGSLIGHLGMSGSLRLVECGLVAAKHEHVDIELESGLALRYTDPRRFGALLWCEDPLRHELLARLGPEPLGGLFDGERLFQLSRGRSMAVKPFIMDNAVVVGVGNIYATEALFAAGIDPRREAGSISRARYLRLAEEIKRILAHAIERGGTTLRDFVGGDGQPGYFQQELFAYGRAGEFCKVCGTTLREVKLGQRASVYCPRCQR</sequence>
<protein>
    <recommendedName>
        <fullName evidence="2">Formamidopyrimidine-DNA glycosylase</fullName>
        <shortName evidence="2">Fapy-DNA glycosylase</shortName>
        <ecNumber evidence="2">3.2.2.23</ecNumber>
    </recommendedName>
    <alternativeName>
        <fullName evidence="2">DNA-(apurinic or apyrimidinic site) lyase MutM</fullName>
        <shortName evidence="2">AP lyase MutM</shortName>
        <ecNumber evidence="2">4.2.99.18</ecNumber>
    </alternativeName>
</protein>
<reference key="1">
    <citation type="submission" date="2007-04" db="EMBL/GenBank/DDBJ databases">
        <title>Complete sequence of Pseudomonas mendocina ymp.</title>
        <authorList>
            <consortium name="US DOE Joint Genome Institute"/>
            <person name="Copeland A."/>
            <person name="Lucas S."/>
            <person name="Lapidus A."/>
            <person name="Barry K."/>
            <person name="Glavina del Rio T."/>
            <person name="Dalin E."/>
            <person name="Tice H."/>
            <person name="Pitluck S."/>
            <person name="Kiss H."/>
            <person name="Brettin T."/>
            <person name="Detter J.C."/>
            <person name="Bruce D."/>
            <person name="Han C."/>
            <person name="Schmutz J."/>
            <person name="Larimer F."/>
            <person name="Land M."/>
            <person name="Hauser L."/>
            <person name="Kyrpides N."/>
            <person name="Mikhailova N."/>
            <person name="Hersman L."/>
            <person name="Dubois J."/>
            <person name="Maurice P."/>
            <person name="Richardson P."/>
        </authorList>
    </citation>
    <scope>NUCLEOTIDE SEQUENCE [LARGE SCALE GENOMIC DNA]</scope>
    <source>
        <strain>ymp</strain>
    </source>
</reference>
<dbReference type="EC" id="3.2.2.23" evidence="2"/>
<dbReference type="EC" id="4.2.99.18" evidence="2"/>
<dbReference type="EMBL" id="CP000680">
    <property type="protein sequence ID" value="ABP86944.1"/>
    <property type="molecule type" value="Genomic_DNA"/>
</dbReference>
<dbReference type="SMR" id="A4Y028"/>
<dbReference type="STRING" id="399739.Pmen_4197"/>
<dbReference type="KEGG" id="pmy:Pmen_4197"/>
<dbReference type="PATRIC" id="fig|399739.8.peg.4249"/>
<dbReference type="eggNOG" id="COG0266">
    <property type="taxonomic scope" value="Bacteria"/>
</dbReference>
<dbReference type="HOGENOM" id="CLU_038423_1_1_6"/>
<dbReference type="OrthoDB" id="9800855at2"/>
<dbReference type="GO" id="GO:0034039">
    <property type="term" value="F:8-oxo-7,8-dihydroguanine DNA N-glycosylase activity"/>
    <property type="evidence" value="ECO:0007669"/>
    <property type="project" value="TreeGrafter"/>
</dbReference>
<dbReference type="GO" id="GO:0140078">
    <property type="term" value="F:class I DNA-(apurinic or apyrimidinic site) endonuclease activity"/>
    <property type="evidence" value="ECO:0007669"/>
    <property type="project" value="UniProtKB-EC"/>
</dbReference>
<dbReference type="GO" id="GO:0003684">
    <property type="term" value="F:damaged DNA binding"/>
    <property type="evidence" value="ECO:0007669"/>
    <property type="project" value="InterPro"/>
</dbReference>
<dbReference type="GO" id="GO:0008270">
    <property type="term" value="F:zinc ion binding"/>
    <property type="evidence" value="ECO:0007669"/>
    <property type="project" value="UniProtKB-UniRule"/>
</dbReference>
<dbReference type="GO" id="GO:0006284">
    <property type="term" value="P:base-excision repair"/>
    <property type="evidence" value="ECO:0007669"/>
    <property type="project" value="InterPro"/>
</dbReference>
<dbReference type="CDD" id="cd08966">
    <property type="entry name" value="EcFpg-like_N"/>
    <property type="match status" value="1"/>
</dbReference>
<dbReference type="FunFam" id="1.10.8.50:FF:000003">
    <property type="entry name" value="Formamidopyrimidine-DNA glycosylase"/>
    <property type="match status" value="1"/>
</dbReference>
<dbReference type="FunFam" id="3.20.190.10:FF:000001">
    <property type="entry name" value="Formamidopyrimidine-DNA glycosylase"/>
    <property type="match status" value="1"/>
</dbReference>
<dbReference type="Gene3D" id="1.10.8.50">
    <property type="match status" value="1"/>
</dbReference>
<dbReference type="Gene3D" id="3.20.190.10">
    <property type="entry name" value="MutM-like, N-terminal"/>
    <property type="match status" value="1"/>
</dbReference>
<dbReference type="HAMAP" id="MF_00103">
    <property type="entry name" value="Fapy_DNA_glycosyl"/>
    <property type="match status" value="1"/>
</dbReference>
<dbReference type="InterPro" id="IPR015886">
    <property type="entry name" value="DNA_glyclase/AP_lyase_DNA-bd"/>
</dbReference>
<dbReference type="InterPro" id="IPR015887">
    <property type="entry name" value="DNA_glyclase_Znf_dom_DNA_BS"/>
</dbReference>
<dbReference type="InterPro" id="IPR020629">
    <property type="entry name" value="Formamido-pyr_DNA_Glyclase"/>
</dbReference>
<dbReference type="InterPro" id="IPR012319">
    <property type="entry name" value="FPG_cat"/>
</dbReference>
<dbReference type="InterPro" id="IPR035937">
    <property type="entry name" value="MutM-like_N-ter"/>
</dbReference>
<dbReference type="InterPro" id="IPR010979">
    <property type="entry name" value="Ribosomal_uS13-like_H2TH"/>
</dbReference>
<dbReference type="InterPro" id="IPR000214">
    <property type="entry name" value="Znf_DNA_glyclase/AP_lyase"/>
</dbReference>
<dbReference type="InterPro" id="IPR010663">
    <property type="entry name" value="Znf_FPG/IleRS"/>
</dbReference>
<dbReference type="NCBIfam" id="TIGR00577">
    <property type="entry name" value="fpg"/>
    <property type="match status" value="1"/>
</dbReference>
<dbReference type="NCBIfam" id="NF002211">
    <property type="entry name" value="PRK01103.1"/>
    <property type="match status" value="1"/>
</dbReference>
<dbReference type="PANTHER" id="PTHR22993">
    <property type="entry name" value="FORMAMIDOPYRIMIDINE-DNA GLYCOSYLASE"/>
    <property type="match status" value="1"/>
</dbReference>
<dbReference type="PANTHER" id="PTHR22993:SF9">
    <property type="entry name" value="FORMAMIDOPYRIMIDINE-DNA GLYCOSYLASE"/>
    <property type="match status" value="1"/>
</dbReference>
<dbReference type="Pfam" id="PF01149">
    <property type="entry name" value="Fapy_DNA_glyco"/>
    <property type="match status" value="1"/>
</dbReference>
<dbReference type="Pfam" id="PF06831">
    <property type="entry name" value="H2TH"/>
    <property type="match status" value="1"/>
</dbReference>
<dbReference type="Pfam" id="PF06827">
    <property type="entry name" value="zf-FPG_IleRS"/>
    <property type="match status" value="1"/>
</dbReference>
<dbReference type="SMART" id="SM00898">
    <property type="entry name" value="Fapy_DNA_glyco"/>
    <property type="match status" value="1"/>
</dbReference>
<dbReference type="SMART" id="SM01232">
    <property type="entry name" value="H2TH"/>
    <property type="match status" value="1"/>
</dbReference>
<dbReference type="SUPFAM" id="SSF57716">
    <property type="entry name" value="Glucocorticoid receptor-like (DNA-binding domain)"/>
    <property type="match status" value="1"/>
</dbReference>
<dbReference type="SUPFAM" id="SSF81624">
    <property type="entry name" value="N-terminal domain of MutM-like DNA repair proteins"/>
    <property type="match status" value="1"/>
</dbReference>
<dbReference type="SUPFAM" id="SSF46946">
    <property type="entry name" value="S13-like H2TH domain"/>
    <property type="match status" value="1"/>
</dbReference>
<dbReference type="PROSITE" id="PS51068">
    <property type="entry name" value="FPG_CAT"/>
    <property type="match status" value="1"/>
</dbReference>
<dbReference type="PROSITE" id="PS01242">
    <property type="entry name" value="ZF_FPG_1"/>
    <property type="match status" value="1"/>
</dbReference>
<dbReference type="PROSITE" id="PS51066">
    <property type="entry name" value="ZF_FPG_2"/>
    <property type="match status" value="1"/>
</dbReference>
<organism>
    <name type="scientific">Ectopseudomonas mendocina (strain ymp)</name>
    <name type="common">Pseudomonas mendocina</name>
    <dbReference type="NCBI Taxonomy" id="399739"/>
    <lineage>
        <taxon>Bacteria</taxon>
        <taxon>Pseudomonadati</taxon>
        <taxon>Pseudomonadota</taxon>
        <taxon>Gammaproteobacteria</taxon>
        <taxon>Pseudomonadales</taxon>
        <taxon>Pseudomonadaceae</taxon>
        <taxon>Ectopseudomonas</taxon>
    </lineage>
</organism>
<name>FPG_ECTM1</name>